<feature type="chain" id="PRO_0000309534" description="Transmembrane protein 120B">
    <location>
        <begin position="1"/>
        <end position="335"/>
    </location>
</feature>
<feature type="transmembrane region" description="Helical" evidence="2">
    <location>
        <begin position="100"/>
        <end position="122"/>
    </location>
</feature>
<feature type="transmembrane region" description="Helical" evidence="2">
    <location>
        <begin position="130"/>
        <end position="150"/>
    </location>
</feature>
<feature type="transmembrane region" description="Helical" evidence="2">
    <location>
        <begin position="157"/>
        <end position="177"/>
    </location>
</feature>
<feature type="transmembrane region" description="Helical" evidence="2">
    <location>
        <begin position="193"/>
        <end position="213"/>
    </location>
</feature>
<feature type="transmembrane region" description="Helical" evidence="2">
    <location>
        <begin position="268"/>
        <end position="288"/>
    </location>
</feature>
<feature type="transmembrane region" description="Helical" evidence="2">
    <location>
        <begin position="300"/>
        <end position="320"/>
    </location>
</feature>
<feature type="coiled-coil region" evidence="2">
    <location>
        <begin position="1"/>
        <end position="39"/>
    </location>
</feature>
<sequence length="335" mass="39929">MSLQKCQEEWGELEKEFQQLQETHKVYKQKLEELNGLQNLCSSYINKHKRRLTELKGNLHGYKHTSNVEEKELVQQINSTIKERHNAFFDMEAYLPKKNGLYLNLVLGNVNVTLLSNQAKFAYKDEYEKFKLYLTIILLLGAITCRFVLHYRVTDEVFNFLLVWYYCTLTIRESILISNGSRIKGWWVSHHYVSTFLSGVMLTWPDGLMYQIFRNQFLAFSIYQSCVQFLQYYYQSGCLYRLRALGERNHLDLTVEGFQSWMWRGLTFLLPFLFFGHFWQLYNAITLFGLSRHEECKEWQVFVLALTFLLLFLGNFLTTLKVVHTKFQKNKLKKP</sequence>
<name>T120B_XENTR</name>
<organism>
    <name type="scientific">Xenopus tropicalis</name>
    <name type="common">Western clawed frog</name>
    <name type="synonym">Silurana tropicalis</name>
    <dbReference type="NCBI Taxonomy" id="8364"/>
    <lineage>
        <taxon>Eukaryota</taxon>
        <taxon>Metazoa</taxon>
        <taxon>Chordata</taxon>
        <taxon>Craniata</taxon>
        <taxon>Vertebrata</taxon>
        <taxon>Euteleostomi</taxon>
        <taxon>Amphibia</taxon>
        <taxon>Batrachia</taxon>
        <taxon>Anura</taxon>
        <taxon>Pipoidea</taxon>
        <taxon>Pipidae</taxon>
        <taxon>Xenopodinae</taxon>
        <taxon>Xenopus</taxon>
        <taxon>Silurana</taxon>
    </lineage>
</organism>
<gene>
    <name type="primary">tmem120b</name>
</gene>
<keyword id="KW-0175">Coiled coil</keyword>
<keyword id="KW-0472">Membrane</keyword>
<keyword id="KW-0539">Nucleus</keyword>
<keyword id="KW-1185">Reference proteome</keyword>
<keyword id="KW-0812">Transmembrane</keyword>
<keyword id="KW-1133">Transmembrane helix</keyword>
<dbReference type="EMBL" id="BC082959">
    <property type="protein sequence ID" value="AAH82959.1"/>
    <property type="molecule type" value="mRNA"/>
</dbReference>
<dbReference type="RefSeq" id="NP_001011029.1">
    <property type="nucleotide sequence ID" value="NM_001011029.2"/>
</dbReference>
<dbReference type="SMR" id="Q63ZG0"/>
<dbReference type="FunCoup" id="Q63ZG0">
    <property type="interactions" value="480"/>
</dbReference>
<dbReference type="PaxDb" id="8364-ENSXETP00000008133"/>
<dbReference type="DNASU" id="496438"/>
<dbReference type="GeneID" id="496438"/>
<dbReference type="KEGG" id="xtr:496438"/>
<dbReference type="AGR" id="Xenbase:XB-GENE-6087368"/>
<dbReference type="CTD" id="144404"/>
<dbReference type="Xenbase" id="XB-GENE-6087368">
    <property type="gene designation" value="tmem120b"/>
</dbReference>
<dbReference type="eggNOG" id="KOG4758">
    <property type="taxonomic scope" value="Eukaryota"/>
</dbReference>
<dbReference type="HOGENOM" id="CLU_048749_1_1_1"/>
<dbReference type="InParanoid" id="Q63ZG0"/>
<dbReference type="OMA" id="WPNTGPW"/>
<dbReference type="OrthoDB" id="2015098at2759"/>
<dbReference type="PhylomeDB" id="Q63ZG0"/>
<dbReference type="Proteomes" id="UP000008143">
    <property type="component" value="Chromosome 1"/>
</dbReference>
<dbReference type="Bgee" id="ENSXETG00000003756">
    <property type="expression patterns" value="Expressed in egg cell and 18 other cell types or tissues"/>
</dbReference>
<dbReference type="ExpressionAtlas" id="Q63ZG0">
    <property type="expression patterns" value="baseline"/>
</dbReference>
<dbReference type="GO" id="GO:0005637">
    <property type="term" value="C:nuclear inner membrane"/>
    <property type="evidence" value="ECO:0007669"/>
    <property type="project" value="UniProtKB-SubCell"/>
</dbReference>
<dbReference type="InterPro" id="IPR012926">
    <property type="entry name" value="TMEM120A/B"/>
</dbReference>
<dbReference type="PANTHER" id="PTHR21433:SF2">
    <property type="entry name" value="TRANSMEMBRANE PROTEIN 120B"/>
    <property type="match status" value="1"/>
</dbReference>
<dbReference type="PANTHER" id="PTHR21433">
    <property type="entry name" value="TRANSMEMBRANE PROTEIN INDUCED BY TUMOR NECROSIS FACTOR ALPHA"/>
    <property type="match status" value="1"/>
</dbReference>
<dbReference type="Pfam" id="PF07851">
    <property type="entry name" value="TMEM120A-B"/>
    <property type="match status" value="1"/>
</dbReference>
<proteinExistence type="evidence at transcript level"/>
<accession>Q63ZG0</accession>
<evidence type="ECO:0000250" key="1">
    <source>
        <dbReference type="UniProtKB" id="Q3TA38"/>
    </source>
</evidence>
<evidence type="ECO:0000255" key="2"/>
<evidence type="ECO:0000305" key="3"/>
<protein>
    <recommendedName>
        <fullName>Transmembrane protein 120B</fullName>
    </recommendedName>
</protein>
<reference key="1">
    <citation type="submission" date="2004-09" db="EMBL/GenBank/DDBJ databases">
        <authorList>
            <consortium name="NIH - Xenopus Gene Collection (XGC) project"/>
        </authorList>
    </citation>
    <scope>NUCLEOTIDE SEQUENCE [LARGE SCALE MRNA]</scope>
    <source>
        <tissue>Embryo</tissue>
    </source>
</reference>
<comment type="function">
    <text evidence="1">Necessary for efficient adipogenesis. Does not show ion channel activity.</text>
</comment>
<comment type="subcellular location">
    <subcellularLocation>
        <location evidence="1">Nucleus inner membrane</location>
        <topology evidence="2">Multi-pass membrane protein</topology>
    </subcellularLocation>
</comment>
<comment type="similarity">
    <text evidence="3">Belongs to the TMEM120 family.</text>
</comment>